<gene>
    <name evidence="1" type="primary">ubiG</name>
    <name type="ordered locus">azo2589</name>
</gene>
<dbReference type="EC" id="2.1.1.222" evidence="1"/>
<dbReference type="EC" id="2.1.1.64" evidence="1"/>
<dbReference type="EMBL" id="AM406670">
    <property type="protein sequence ID" value="CAL95206.1"/>
    <property type="molecule type" value="Genomic_DNA"/>
</dbReference>
<dbReference type="RefSeq" id="WP_011766316.1">
    <property type="nucleotide sequence ID" value="NC_008702.1"/>
</dbReference>
<dbReference type="SMR" id="A1K8Q1"/>
<dbReference type="STRING" id="62928.azo2589"/>
<dbReference type="KEGG" id="aoa:dqs_2749"/>
<dbReference type="KEGG" id="azo:azo2589"/>
<dbReference type="eggNOG" id="COG2227">
    <property type="taxonomic scope" value="Bacteria"/>
</dbReference>
<dbReference type="HOGENOM" id="CLU_042432_5_0_4"/>
<dbReference type="OrthoDB" id="9801538at2"/>
<dbReference type="UniPathway" id="UPA00232"/>
<dbReference type="Proteomes" id="UP000002588">
    <property type="component" value="Chromosome"/>
</dbReference>
<dbReference type="GO" id="GO:0102208">
    <property type="term" value="F:2-polyprenyl-6-hydroxyphenol methylase activity"/>
    <property type="evidence" value="ECO:0007669"/>
    <property type="project" value="UniProtKB-EC"/>
</dbReference>
<dbReference type="GO" id="GO:0061542">
    <property type="term" value="F:3-demethylubiquinol 3-O-methyltransferase activity"/>
    <property type="evidence" value="ECO:0007669"/>
    <property type="project" value="UniProtKB-UniRule"/>
</dbReference>
<dbReference type="GO" id="GO:0010420">
    <property type="term" value="F:polyprenyldihydroxybenzoate methyltransferase activity"/>
    <property type="evidence" value="ECO:0007669"/>
    <property type="project" value="InterPro"/>
</dbReference>
<dbReference type="GO" id="GO:0032259">
    <property type="term" value="P:methylation"/>
    <property type="evidence" value="ECO:0007669"/>
    <property type="project" value="UniProtKB-KW"/>
</dbReference>
<dbReference type="CDD" id="cd02440">
    <property type="entry name" value="AdoMet_MTases"/>
    <property type="match status" value="1"/>
</dbReference>
<dbReference type="FunFam" id="3.40.50.150:FF:000028">
    <property type="entry name" value="Ubiquinone biosynthesis O-methyltransferase"/>
    <property type="match status" value="1"/>
</dbReference>
<dbReference type="Gene3D" id="3.40.50.150">
    <property type="entry name" value="Vaccinia Virus protein VP39"/>
    <property type="match status" value="1"/>
</dbReference>
<dbReference type="HAMAP" id="MF_00472">
    <property type="entry name" value="UbiG"/>
    <property type="match status" value="1"/>
</dbReference>
<dbReference type="InterPro" id="IPR029063">
    <property type="entry name" value="SAM-dependent_MTases_sf"/>
</dbReference>
<dbReference type="InterPro" id="IPR010233">
    <property type="entry name" value="UbiG_MeTrfase"/>
</dbReference>
<dbReference type="NCBIfam" id="TIGR01983">
    <property type="entry name" value="UbiG"/>
    <property type="match status" value="1"/>
</dbReference>
<dbReference type="PANTHER" id="PTHR43464">
    <property type="entry name" value="METHYLTRANSFERASE"/>
    <property type="match status" value="1"/>
</dbReference>
<dbReference type="PANTHER" id="PTHR43464:SF19">
    <property type="entry name" value="UBIQUINONE BIOSYNTHESIS O-METHYLTRANSFERASE, MITOCHONDRIAL"/>
    <property type="match status" value="1"/>
</dbReference>
<dbReference type="Pfam" id="PF13489">
    <property type="entry name" value="Methyltransf_23"/>
    <property type="match status" value="1"/>
</dbReference>
<dbReference type="SUPFAM" id="SSF53335">
    <property type="entry name" value="S-adenosyl-L-methionine-dependent methyltransferases"/>
    <property type="match status" value="1"/>
</dbReference>
<keyword id="KW-0489">Methyltransferase</keyword>
<keyword id="KW-1185">Reference proteome</keyword>
<keyword id="KW-0949">S-adenosyl-L-methionine</keyword>
<keyword id="KW-0808">Transferase</keyword>
<keyword id="KW-0831">Ubiquinone biosynthesis</keyword>
<feature type="chain" id="PRO_1000013889" description="Ubiquinone biosynthesis O-methyltransferase">
    <location>
        <begin position="1"/>
        <end position="233"/>
    </location>
</feature>
<feature type="binding site" evidence="1">
    <location>
        <position position="37"/>
    </location>
    <ligand>
        <name>S-adenosyl-L-methionine</name>
        <dbReference type="ChEBI" id="CHEBI:59789"/>
    </ligand>
</feature>
<feature type="binding site" evidence="1">
    <location>
        <position position="56"/>
    </location>
    <ligand>
        <name>S-adenosyl-L-methionine</name>
        <dbReference type="ChEBI" id="CHEBI:59789"/>
    </ligand>
</feature>
<feature type="binding site" evidence="1">
    <location>
        <position position="77"/>
    </location>
    <ligand>
        <name>S-adenosyl-L-methionine</name>
        <dbReference type="ChEBI" id="CHEBI:59789"/>
    </ligand>
</feature>
<feature type="binding site" evidence="1">
    <location>
        <position position="121"/>
    </location>
    <ligand>
        <name>S-adenosyl-L-methionine</name>
        <dbReference type="ChEBI" id="CHEBI:59789"/>
    </ligand>
</feature>
<sequence>MNTNADPAEVQKFSDLAHRWWDPASEFKPLHEINPLRLDWIDGHCGLAGKKVLDVGCGGGLLSEGMAQRGAEVSGIDLSEKALGVARLHLYESGLQVDYQLTSAEAHAATHPAQFDVVTCMEMLEHVPNPESTVHACAQMAKPGGAVFFSTLNRNFKAYLFAVVGAEYLLNLLPRGTHDYAKFIKPSELSRYCRNAGLELVSLSGMTYNPITKVYALSRDTDVNYMVHARKLG</sequence>
<name>UBIG_AZOSB</name>
<reference key="1">
    <citation type="journal article" date="2006" name="Nat. Biotechnol.">
        <title>Complete genome of the mutualistic, N2-fixing grass endophyte Azoarcus sp. strain BH72.</title>
        <authorList>
            <person name="Krause A."/>
            <person name="Ramakumar A."/>
            <person name="Bartels D."/>
            <person name="Battistoni F."/>
            <person name="Bekel T."/>
            <person name="Boch J."/>
            <person name="Boehm M."/>
            <person name="Friedrich F."/>
            <person name="Hurek T."/>
            <person name="Krause L."/>
            <person name="Linke B."/>
            <person name="McHardy A.C."/>
            <person name="Sarkar A."/>
            <person name="Schneiker S."/>
            <person name="Syed A.A."/>
            <person name="Thauer R."/>
            <person name="Vorhoelter F.-J."/>
            <person name="Weidner S."/>
            <person name="Puehler A."/>
            <person name="Reinhold-Hurek B."/>
            <person name="Kaiser O."/>
            <person name="Goesmann A."/>
        </authorList>
    </citation>
    <scope>NUCLEOTIDE SEQUENCE [LARGE SCALE GENOMIC DNA]</scope>
    <source>
        <strain>BH72</strain>
    </source>
</reference>
<evidence type="ECO:0000255" key="1">
    <source>
        <dbReference type="HAMAP-Rule" id="MF_00472"/>
    </source>
</evidence>
<protein>
    <recommendedName>
        <fullName evidence="1">Ubiquinone biosynthesis O-methyltransferase</fullName>
    </recommendedName>
    <alternativeName>
        <fullName evidence="1">2-polyprenyl-6-hydroxyphenol methylase</fullName>
        <ecNumber evidence="1">2.1.1.222</ecNumber>
    </alternativeName>
    <alternativeName>
        <fullName evidence="1">3-demethylubiquinone 3-O-methyltransferase</fullName>
        <ecNumber evidence="1">2.1.1.64</ecNumber>
    </alternativeName>
</protein>
<comment type="function">
    <text evidence="1">O-methyltransferase that catalyzes the 2 O-methylation steps in the ubiquinone biosynthetic pathway.</text>
</comment>
<comment type="catalytic activity">
    <reaction evidence="1">
        <text>a 3-demethylubiquinol + S-adenosyl-L-methionine = a ubiquinol + S-adenosyl-L-homocysteine + H(+)</text>
        <dbReference type="Rhea" id="RHEA:44380"/>
        <dbReference type="Rhea" id="RHEA-COMP:9566"/>
        <dbReference type="Rhea" id="RHEA-COMP:10914"/>
        <dbReference type="ChEBI" id="CHEBI:15378"/>
        <dbReference type="ChEBI" id="CHEBI:17976"/>
        <dbReference type="ChEBI" id="CHEBI:57856"/>
        <dbReference type="ChEBI" id="CHEBI:59789"/>
        <dbReference type="ChEBI" id="CHEBI:84422"/>
        <dbReference type="EC" id="2.1.1.64"/>
    </reaction>
</comment>
<comment type="catalytic activity">
    <reaction evidence="1">
        <text>a 3-(all-trans-polyprenyl)benzene-1,2-diol + S-adenosyl-L-methionine = a 2-methoxy-6-(all-trans-polyprenyl)phenol + S-adenosyl-L-homocysteine + H(+)</text>
        <dbReference type="Rhea" id="RHEA:31411"/>
        <dbReference type="Rhea" id="RHEA-COMP:9550"/>
        <dbReference type="Rhea" id="RHEA-COMP:9551"/>
        <dbReference type="ChEBI" id="CHEBI:15378"/>
        <dbReference type="ChEBI" id="CHEBI:57856"/>
        <dbReference type="ChEBI" id="CHEBI:59789"/>
        <dbReference type="ChEBI" id="CHEBI:62729"/>
        <dbReference type="ChEBI" id="CHEBI:62731"/>
        <dbReference type="EC" id="2.1.1.222"/>
    </reaction>
</comment>
<comment type="pathway">
    <text evidence="1">Cofactor biosynthesis; ubiquinone biosynthesis.</text>
</comment>
<comment type="similarity">
    <text evidence="1">Belongs to the methyltransferase superfamily. UbiG/COQ3 family.</text>
</comment>
<accession>A1K8Q1</accession>
<proteinExistence type="inferred from homology"/>
<organism>
    <name type="scientific">Azoarcus sp. (strain BH72)</name>
    <dbReference type="NCBI Taxonomy" id="418699"/>
    <lineage>
        <taxon>Bacteria</taxon>
        <taxon>Pseudomonadati</taxon>
        <taxon>Pseudomonadota</taxon>
        <taxon>Betaproteobacteria</taxon>
        <taxon>Rhodocyclales</taxon>
        <taxon>Zoogloeaceae</taxon>
        <taxon>Azoarcus</taxon>
    </lineage>
</organism>